<evidence type="ECO:0000255" key="1">
    <source>
        <dbReference type="HAMAP-Rule" id="MF_01852"/>
    </source>
</evidence>
<dbReference type="EC" id="2.7.7.87" evidence="1"/>
<dbReference type="EMBL" id="AE013598">
    <property type="protein sequence ID" value="AAW73832.1"/>
    <property type="molecule type" value="Genomic_DNA"/>
</dbReference>
<dbReference type="SMR" id="Q5H5D8"/>
<dbReference type="STRING" id="291331.XOO0578"/>
<dbReference type="KEGG" id="xoo:XOO0578"/>
<dbReference type="HOGENOM" id="CLU_031397_6_0_6"/>
<dbReference type="Proteomes" id="UP000006735">
    <property type="component" value="Chromosome"/>
</dbReference>
<dbReference type="GO" id="GO:0005737">
    <property type="term" value="C:cytoplasm"/>
    <property type="evidence" value="ECO:0007669"/>
    <property type="project" value="UniProtKB-SubCell"/>
</dbReference>
<dbReference type="GO" id="GO:0005524">
    <property type="term" value="F:ATP binding"/>
    <property type="evidence" value="ECO:0007669"/>
    <property type="project" value="UniProtKB-UniRule"/>
</dbReference>
<dbReference type="GO" id="GO:0003725">
    <property type="term" value="F:double-stranded RNA binding"/>
    <property type="evidence" value="ECO:0007669"/>
    <property type="project" value="InterPro"/>
</dbReference>
<dbReference type="GO" id="GO:0061710">
    <property type="term" value="F:L-threonylcarbamoyladenylate synthase"/>
    <property type="evidence" value="ECO:0007669"/>
    <property type="project" value="UniProtKB-EC"/>
</dbReference>
<dbReference type="GO" id="GO:0000049">
    <property type="term" value="F:tRNA binding"/>
    <property type="evidence" value="ECO:0007669"/>
    <property type="project" value="TreeGrafter"/>
</dbReference>
<dbReference type="GO" id="GO:0006450">
    <property type="term" value="P:regulation of translational fidelity"/>
    <property type="evidence" value="ECO:0007669"/>
    <property type="project" value="TreeGrafter"/>
</dbReference>
<dbReference type="GO" id="GO:0002949">
    <property type="term" value="P:tRNA threonylcarbamoyladenosine modification"/>
    <property type="evidence" value="ECO:0007669"/>
    <property type="project" value="UniProtKB-UniRule"/>
</dbReference>
<dbReference type="FunFam" id="3.90.870.10:FF:000004">
    <property type="entry name" value="Threonylcarbamoyl-AMP synthase"/>
    <property type="match status" value="1"/>
</dbReference>
<dbReference type="Gene3D" id="3.90.870.10">
    <property type="entry name" value="DHBP synthase"/>
    <property type="match status" value="1"/>
</dbReference>
<dbReference type="HAMAP" id="MF_01852">
    <property type="entry name" value="TsaC"/>
    <property type="match status" value="1"/>
</dbReference>
<dbReference type="InterPro" id="IPR017945">
    <property type="entry name" value="DHBP_synth_RibB-like_a/b_dom"/>
</dbReference>
<dbReference type="InterPro" id="IPR006070">
    <property type="entry name" value="Sua5-like_dom"/>
</dbReference>
<dbReference type="InterPro" id="IPR023535">
    <property type="entry name" value="TC-AMP_synthase"/>
</dbReference>
<dbReference type="InterPro" id="IPR050156">
    <property type="entry name" value="TC-AMP_synthase_SUA5"/>
</dbReference>
<dbReference type="PANTHER" id="PTHR17490">
    <property type="entry name" value="SUA5"/>
    <property type="match status" value="1"/>
</dbReference>
<dbReference type="PANTHER" id="PTHR17490:SF18">
    <property type="entry name" value="THREONYLCARBAMOYL-AMP SYNTHASE"/>
    <property type="match status" value="1"/>
</dbReference>
<dbReference type="Pfam" id="PF01300">
    <property type="entry name" value="Sua5_yciO_yrdC"/>
    <property type="match status" value="1"/>
</dbReference>
<dbReference type="SUPFAM" id="SSF55821">
    <property type="entry name" value="YrdC/RibB"/>
    <property type="match status" value="1"/>
</dbReference>
<dbReference type="PROSITE" id="PS51163">
    <property type="entry name" value="YRDC"/>
    <property type="match status" value="1"/>
</dbReference>
<feature type="chain" id="PRO_0000353014" description="Threonylcarbamoyl-AMP synthase">
    <location>
        <begin position="1"/>
        <end position="187"/>
    </location>
</feature>
<feature type="domain" description="YrdC-like" evidence="1">
    <location>
        <begin position="4"/>
        <end position="187"/>
    </location>
</feature>
<comment type="function">
    <text evidence="1">Required for the formation of a threonylcarbamoyl group on adenosine at position 37 (t(6)A37) in tRNAs that read codons beginning with adenine. Catalyzes the conversion of L-threonine, HCO(3)(-)/CO(2) and ATP to give threonylcarbamoyl-AMP (TC-AMP) as the acyladenylate intermediate, with the release of diphosphate.</text>
</comment>
<comment type="catalytic activity">
    <reaction evidence="1">
        <text>L-threonine + hydrogencarbonate + ATP = L-threonylcarbamoyladenylate + diphosphate + H2O</text>
        <dbReference type="Rhea" id="RHEA:36407"/>
        <dbReference type="ChEBI" id="CHEBI:15377"/>
        <dbReference type="ChEBI" id="CHEBI:17544"/>
        <dbReference type="ChEBI" id="CHEBI:30616"/>
        <dbReference type="ChEBI" id="CHEBI:33019"/>
        <dbReference type="ChEBI" id="CHEBI:57926"/>
        <dbReference type="ChEBI" id="CHEBI:73682"/>
        <dbReference type="EC" id="2.7.7.87"/>
    </reaction>
</comment>
<comment type="subcellular location">
    <subcellularLocation>
        <location evidence="1">Cytoplasm</location>
    </subcellularLocation>
</comment>
<comment type="similarity">
    <text evidence="1">Belongs to the SUA5 family. TsaC subfamily.</text>
</comment>
<proteinExistence type="inferred from homology"/>
<reference key="1">
    <citation type="journal article" date="2005" name="Nucleic Acids Res.">
        <title>The genome sequence of Xanthomonas oryzae pathovar oryzae KACC10331, the bacterial blight pathogen of rice.</title>
        <authorList>
            <person name="Lee B.-M."/>
            <person name="Park Y.-J."/>
            <person name="Park D.-S."/>
            <person name="Kang H.-W."/>
            <person name="Kim J.-G."/>
            <person name="Song E.-S."/>
            <person name="Park I.-C."/>
            <person name="Yoon U.-H."/>
            <person name="Hahn J.-H."/>
            <person name="Koo B.-S."/>
            <person name="Lee G.-B."/>
            <person name="Kim H."/>
            <person name="Park H.-S."/>
            <person name="Yoon K.-O."/>
            <person name="Kim J.-H."/>
            <person name="Jung C.-H."/>
            <person name="Koh N.-H."/>
            <person name="Seo J.-S."/>
            <person name="Go S.-J."/>
        </authorList>
    </citation>
    <scope>NUCLEOTIDE SEQUENCE [LARGE SCALE GENOMIC DNA]</scope>
    <source>
        <strain>KACC10331 / KXO85</strain>
    </source>
</reference>
<name>TSAC_XANOR</name>
<accession>Q5H5D8</accession>
<organism>
    <name type="scientific">Xanthomonas oryzae pv. oryzae (strain KACC10331 / KXO85)</name>
    <dbReference type="NCBI Taxonomy" id="291331"/>
    <lineage>
        <taxon>Bacteria</taxon>
        <taxon>Pseudomonadati</taxon>
        <taxon>Pseudomonadota</taxon>
        <taxon>Gammaproteobacteria</taxon>
        <taxon>Lysobacterales</taxon>
        <taxon>Lysobacteraceae</taxon>
        <taxon>Xanthomonas</taxon>
    </lineage>
</organism>
<protein>
    <recommendedName>
        <fullName evidence="1">Threonylcarbamoyl-AMP synthase</fullName>
        <shortName evidence="1">TC-AMP synthase</shortName>
        <ecNumber evidence="1">2.7.7.87</ecNumber>
    </recommendedName>
    <alternativeName>
        <fullName evidence="1">L-threonylcarbamoyladenylate synthase</fullName>
    </alternativeName>
    <alternativeName>
        <fullName evidence="1">t(6)A37 threonylcarbamoyladenosine biosynthesis protein TsaC</fullName>
    </alternativeName>
    <alternativeName>
        <fullName evidence="1">tRNA threonylcarbamoyladenosine biosynthesis protein TsaC</fullName>
    </alternativeName>
</protein>
<gene>
    <name evidence="1" type="primary">tsaC</name>
    <name type="synonym">rimN</name>
    <name type="ordered locus">XOO0578</name>
</gene>
<keyword id="KW-0067">ATP-binding</keyword>
<keyword id="KW-0963">Cytoplasm</keyword>
<keyword id="KW-0547">Nucleotide-binding</keyword>
<keyword id="KW-0548">Nucleotidyltransferase</keyword>
<keyword id="KW-1185">Reference proteome</keyword>
<keyword id="KW-0808">Transferase</keyword>
<keyword id="KW-0819">tRNA processing</keyword>
<sequence length="187" mass="19884">MTHILTLDNAVATLTQGGVIAYPTEAVWGLGCDPRQEAAVLRLLEIKRRPVDKGVIVVTSRVDVLRDWVDIDALAPARRQDVLASWPGPHTWILPVTARAPRWVTGEHDGLAVRISAHPVVAALCAAWGAPLVSTSANLAGEPPARSRAALEPALLATIDGVVDGEVGALAQPTRIRDARSGQILRD</sequence>